<gene>
    <name type="primary">FAM228A</name>
    <name type="synonym">C2orf84</name>
</gene>
<accession>Q86W67</accession>
<keyword id="KW-1185">Reference proteome</keyword>
<name>F228A_HUMAN</name>
<comment type="interaction">
    <interactant intactId="EBI-12958227">
        <id>Q86W67</id>
    </interactant>
    <interactant intactId="EBI-358049">
        <id>Q13895</id>
        <label>BYSL</label>
    </interactant>
    <organismsDiffer>false</organismsDiffer>
    <experiments>3</experiments>
</comment>
<comment type="interaction">
    <interactant intactId="EBI-12958227">
        <id>Q86W67</id>
    </interactant>
    <interactant intactId="EBI-10961624">
        <id>Q2TAC2-2</id>
        <label>CCDC57</label>
    </interactant>
    <organismsDiffer>false</organismsDiffer>
    <experiments>3</experiments>
</comment>
<comment type="interaction">
    <interactant intactId="EBI-12958227">
        <id>Q86W67</id>
    </interactant>
    <interactant intactId="EBI-745859">
        <id>P55273</id>
        <label>CDKN2D</label>
    </interactant>
    <organismsDiffer>false</organismsDiffer>
    <experiments>3</experiments>
</comment>
<comment type="interaction">
    <interactant intactId="EBI-12958227">
        <id>Q86W67</id>
    </interactant>
    <interactant intactId="EBI-1053725">
        <id>P10606</id>
        <label>COX5B</label>
    </interactant>
    <organismsDiffer>false</organismsDiffer>
    <experiments>3</experiments>
</comment>
<comment type="interaction">
    <interactant intactId="EBI-12958227">
        <id>Q86W67</id>
    </interactant>
    <interactant intactId="EBI-769261">
        <id>Q96JC9</id>
        <label>EAF1</label>
    </interactant>
    <organismsDiffer>false</organismsDiffer>
    <experiments>3</experiments>
</comment>
<comment type="interaction">
    <interactant intactId="EBI-12958227">
        <id>Q86W67</id>
    </interactant>
    <interactant intactId="EBI-744099">
        <id>Q9H0I2</id>
        <label>ENKD1</label>
    </interactant>
    <organismsDiffer>false</organismsDiffer>
    <experiments>3</experiments>
</comment>
<comment type="interaction">
    <interactant intactId="EBI-12958227">
        <id>Q86W67</id>
    </interactant>
    <interactant intactId="EBI-6658203">
        <id>Q86YD7</id>
        <label>FAM90A1</label>
    </interactant>
    <organismsDiffer>false</organismsDiffer>
    <experiments>3</experiments>
</comment>
<comment type="interaction">
    <interactant intactId="EBI-12958227">
        <id>Q86W67</id>
    </interactant>
    <interactant intactId="EBI-740553">
        <id>P13807</id>
        <label>GYS1</label>
    </interactant>
    <organismsDiffer>false</organismsDiffer>
    <experiments>3</experiments>
</comment>
<comment type="interaction">
    <interactant intactId="EBI-12958227">
        <id>Q86W67</id>
    </interactant>
    <interactant intactId="EBI-7116203">
        <id>O75031</id>
        <label>HSF2BP</label>
    </interactant>
    <organismsDiffer>false</organismsDiffer>
    <experiments>3</experiments>
</comment>
<comment type="interaction">
    <interactant intactId="EBI-12958227">
        <id>Q86W67</id>
    </interactant>
    <interactant intactId="EBI-21706776">
        <id>P01568</id>
        <label>IFNA21</label>
    </interactant>
    <organismsDiffer>false</organismsDiffer>
    <experiments>2</experiments>
</comment>
<comment type="interaction">
    <interactant intactId="EBI-12958227">
        <id>Q86W67</id>
    </interactant>
    <interactant intactId="EBI-11959475">
        <id>P25791-3</id>
        <label>LMO2</label>
    </interactant>
    <organismsDiffer>false</organismsDiffer>
    <experiments>3</experiments>
</comment>
<comment type="interaction">
    <interactant intactId="EBI-12958227">
        <id>Q86W67</id>
    </interactant>
    <interactant intactId="EBI-2798728">
        <id>P61968</id>
        <label>LMO4</label>
    </interactant>
    <organismsDiffer>false</organismsDiffer>
    <experiments>3</experiments>
</comment>
<comment type="interaction">
    <interactant intactId="EBI-12958227">
        <id>Q86W67</id>
    </interactant>
    <interactant intactId="EBI-744248">
        <id>P40692</id>
        <label>MLH1</label>
    </interactant>
    <organismsDiffer>false</organismsDiffer>
    <experiments>3</experiments>
</comment>
<comment type="interaction">
    <interactant intactId="EBI-12958227">
        <id>Q86W67</id>
    </interactant>
    <interactant intactId="EBI-12069346">
        <id>Q6IQ23-2</id>
        <label>PLEKHA7</label>
    </interactant>
    <organismsDiffer>false</organismsDiffer>
    <experiments>3</experiments>
</comment>
<comment type="interaction">
    <interactant intactId="EBI-12958227">
        <id>Q86W67</id>
    </interactant>
    <interactant intactId="EBI-711613">
        <id>P21673</id>
        <label>SAT1</label>
    </interactant>
    <organismsDiffer>false</organismsDiffer>
    <experiments>3</experiments>
</comment>
<comment type="interaction">
    <interactant intactId="EBI-12958227">
        <id>Q86W67</id>
    </interactant>
    <interactant intactId="EBI-748391">
        <id>Q9BWG6</id>
        <label>SCNM1</label>
    </interactant>
    <organismsDiffer>false</organismsDiffer>
    <experiments>3</experiments>
</comment>
<comment type="interaction">
    <interactant intactId="EBI-12958227">
        <id>Q86W67</id>
    </interactant>
    <interactant intactId="EBI-12037215">
        <id>Q5MJ09</id>
        <label>SPANXN3</label>
    </interactant>
    <organismsDiffer>false</organismsDiffer>
    <experiments>3</experiments>
</comment>
<comment type="interaction">
    <interactant intactId="EBI-12958227">
        <id>Q86W67</id>
    </interactant>
    <interactant intactId="EBI-949753">
        <id>Q63HR2</id>
        <label>TNS2</label>
    </interactant>
    <organismsDiffer>false</organismsDiffer>
    <experiments>3</experiments>
</comment>
<comment type="interaction">
    <interactant intactId="EBI-12958227">
        <id>Q86W67</id>
    </interactant>
    <interactant intactId="EBI-7254550">
        <id>P36508</id>
        <label>ZNF76</label>
    </interactant>
    <organismsDiffer>false</organismsDiffer>
    <experiments>3</experiments>
</comment>
<comment type="similarity">
    <text evidence="1">Belongs to the FAM228 family.</text>
</comment>
<reference key="1">
    <citation type="journal article" date="2005" name="Nature">
        <title>Generation and annotation of the DNA sequences of human chromosomes 2 and 4.</title>
        <authorList>
            <person name="Hillier L.W."/>
            <person name="Graves T.A."/>
            <person name="Fulton R.S."/>
            <person name="Fulton L.A."/>
            <person name="Pepin K.H."/>
            <person name="Minx P."/>
            <person name="Wagner-McPherson C."/>
            <person name="Layman D."/>
            <person name="Wylie K."/>
            <person name="Sekhon M."/>
            <person name="Becker M.C."/>
            <person name="Fewell G.A."/>
            <person name="Delehaunty K.D."/>
            <person name="Miner T.L."/>
            <person name="Nash W.E."/>
            <person name="Kremitzki C."/>
            <person name="Oddy L."/>
            <person name="Du H."/>
            <person name="Sun H."/>
            <person name="Bradshaw-Cordum H."/>
            <person name="Ali J."/>
            <person name="Carter J."/>
            <person name="Cordes M."/>
            <person name="Harris A."/>
            <person name="Isak A."/>
            <person name="van Brunt A."/>
            <person name="Nguyen C."/>
            <person name="Du F."/>
            <person name="Courtney L."/>
            <person name="Kalicki J."/>
            <person name="Ozersky P."/>
            <person name="Abbott S."/>
            <person name="Armstrong J."/>
            <person name="Belter E.A."/>
            <person name="Caruso L."/>
            <person name="Cedroni M."/>
            <person name="Cotton M."/>
            <person name="Davidson T."/>
            <person name="Desai A."/>
            <person name="Elliott G."/>
            <person name="Erb T."/>
            <person name="Fronick C."/>
            <person name="Gaige T."/>
            <person name="Haakenson W."/>
            <person name="Haglund K."/>
            <person name="Holmes A."/>
            <person name="Harkins R."/>
            <person name="Kim K."/>
            <person name="Kruchowski S.S."/>
            <person name="Strong C.M."/>
            <person name="Grewal N."/>
            <person name="Goyea E."/>
            <person name="Hou S."/>
            <person name="Levy A."/>
            <person name="Martinka S."/>
            <person name="Mead K."/>
            <person name="McLellan M.D."/>
            <person name="Meyer R."/>
            <person name="Randall-Maher J."/>
            <person name="Tomlinson C."/>
            <person name="Dauphin-Kohlberg S."/>
            <person name="Kozlowicz-Reilly A."/>
            <person name="Shah N."/>
            <person name="Swearengen-Shahid S."/>
            <person name="Snider J."/>
            <person name="Strong J.T."/>
            <person name="Thompson J."/>
            <person name="Yoakum M."/>
            <person name="Leonard S."/>
            <person name="Pearman C."/>
            <person name="Trani L."/>
            <person name="Radionenko M."/>
            <person name="Waligorski J.E."/>
            <person name="Wang C."/>
            <person name="Rock S.M."/>
            <person name="Tin-Wollam A.-M."/>
            <person name="Maupin R."/>
            <person name="Latreille P."/>
            <person name="Wendl M.C."/>
            <person name="Yang S.-P."/>
            <person name="Pohl C."/>
            <person name="Wallis J.W."/>
            <person name="Spieth J."/>
            <person name="Bieri T.A."/>
            <person name="Berkowicz N."/>
            <person name="Nelson J.O."/>
            <person name="Osborne J."/>
            <person name="Ding L."/>
            <person name="Meyer R."/>
            <person name="Sabo A."/>
            <person name="Shotland Y."/>
            <person name="Sinha P."/>
            <person name="Wohldmann P.E."/>
            <person name="Cook L.L."/>
            <person name="Hickenbotham M.T."/>
            <person name="Eldred J."/>
            <person name="Williams D."/>
            <person name="Jones T.A."/>
            <person name="She X."/>
            <person name="Ciccarelli F.D."/>
            <person name="Izaurralde E."/>
            <person name="Taylor J."/>
            <person name="Schmutz J."/>
            <person name="Myers R.M."/>
            <person name="Cox D.R."/>
            <person name="Huang X."/>
            <person name="McPherson J.D."/>
            <person name="Mardis E.R."/>
            <person name="Clifton S.W."/>
            <person name="Warren W.C."/>
            <person name="Chinwalla A.T."/>
            <person name="Eddy S.R."/>
            <person name="Marra M.A."/>
            <person name="Ovcharenko I."/>
            <person name="Furey T.S."/>
            <person name="Miller W."/>
            <person name="Eichler E.E."/>
            <person name="Bork P."/>
            <person name="Suyama M."/>
            <person name="Torrents D."/>
            <person name="Waterston R.H."/>
            <person name="Wilson R.K."/>
        </authorList>
    </citation>
    <scope>NUCLEOTIDE SEQUENCE [LARGE SCALE GENOMIC DNA]</scope>
</reference>
<reference key="2">
    <citation type="submission" date="2005-09" db="EMBL/GenBank/DDBJ databases">
        <authorList>
            <person name="Mural R.J."/>
            <person name="Istrail S."/>
            <person name="Sutton G.G."/>
            <person name="Florea L."/>
            <person name="Halpern A.L."/>
            <person name="Mobarry C.M."/>
            <person name="Lippert R."/>
            <person name="Walenz B."/>
            <person name="Shatkay H."/>
            <person name="Dew I."/>
            <person name="Miller J.R."/>
            <person name="Flanigan M.J."/>
            <person name="Edwards N.J."/>
            <person name="Bolanos R."/>
            <person name="Fasulo D."/>
            <person name="Halldorsson B.V."/>
            <person name="Hannenhalli S."/>
            <person name="Turner R."/>
            <person name="Yooseph S."/>
            <person name="Lu F."/>
            <person name="Nusskern D.R."/>
            <person name="Shue B.C."/>
            <person name="Zheng X.H."/>
            <person name="Zhong F."/>
            <person name="Delcher A.L."/>
            <person name="Huson D.H."/>
            <person name="Kravitz S.A."/>
            <person name="Mouchard L."/>
            <person name="Reinert K."/>
            <person name="Remington K.A."/>
            <person name="Clark A.G."/>
            <person name="Waterman M.S."/>
            <person name="Eichler E.E."/>
            <person name="Adams M.D."/>
            <person name="Hunkapiller M.W."/>
            <person name="Myers E.W."/>
            <person name="Venter J.C."/>
        </authorList>
    </citation>
    <scope>NUCLEOTIDE SEQUENCE [LARGE SCALE GENOMIC DNA]</scope>
</reference>
<reference key="3">
    <citation type="journal article" date="2004" name="Genome Res.">
        <title>The status, quality, and expansion of the NIH full-length cDNA project: the Mammalian Gene Collection (MGC).</title>
        <authorList>
            <consortium name="The MGC Project Team"/>
        </authorList>
    </citation>
    <scope>NUCLEOTIDE SEQUENCE [LARGE SCALE MRNA]</scope>
    <source>
        <tissue>Brain</tissue>
    </source>
</reference>
<evidence type="ECO:0000305" key="1"/>
<protein>
    <recommendedName>
        <fullName>Protein FAM228A</fullName>
    </recommendedName>
</protein>
<sequence>MAATKTASYDEHFRPEKLREWPEPESVSLMEVLAREDIDEAVCAILFKENSIVKVTVPPFVDPLFQRQQEVDEERRTGLQCETGKRHSIKELEEIEKARLHASSPYFTFTSHCVIPKEWHKASARARSKTYKYSPEKLIYADKKQKRKEKKTADLSQAAFERQFLSSKLSQKNKVGERKGLVSRGLGRGWHAGLCSTHEQHILVPE</sequence>
<dbReference type="EMBL" id="AC008073">
    <property type="protein sequence ID" value="AAY14667.1"/>
    <property type="molecule type" value="Genomic_DNA"/>
</dbReference>
<dbReference type="EMBL" id="CH471053">
    <property type="protein sequence ID" value="EAX00756.1"/>
    <property type="molecule type" value="Genomic_DNA"/>
</dbReference>
<dbReference type="EMBL" id="BC050462">
    <property type="protein sequence ID" value="AAH50462.1"/>
    <property type="molecule type" value="mRNA"/>
</dbReference>
<dbReference type="CCDS" id="CCDS42659.1"/>
<dbReference type="RefSeq" id="NP_001035800.1">
    <property type="nucleotide sequence ID" value="NM_001040710.3"/>
</dbReference>
<dbReference type="BioGRID" id="575555">
    <property type="interactions" value="20"/>
</dbReference>
<dbReference type="FunCoup" id="Q86W67">
    <property type="interactions" value="1"/>
</dbReference>
<dbReference type="IntAct" id="Q86W67">
    <property type="interactions" value="19"/>
</dbReference>
<dbReference type="STRING" id="9606.ENSP00000295150"/>
<dbReference type="iPTMnet" id="Q86W67"/>
<dbReference type="PhosphoSitePlus" id="Q86W67"/>
<dbReference type="BioMuta" id="FAM228A"/>
<dbReference type="MassIVE" id="Q86W67"/>
<dbReference type="PaxDb" id="9606-ENSP00000295150"/>
<dbReference type="Antibodypedia" id="51135">
    <property type="antibodies" value="6 antibodies from 5 providers"/>
</dbReference>
<dbReference type="DNASU" id="653140"/>
<dbReference type="Ensembl" id="ENST00000295150.8">
    <property type="protein sequence ID" value="ENSP00000295150.3"/>
    <property type="gene ID" value="ENSG00000186453.13"/>
</dbReference>
<dbReference type="GeneID" id="653140"/>
<dbReference type="KEGG" id="hsa:653140"/>
<dbReference type="MANE-Select" id="ENST00000295150.8">
    <property type="protein sequence ID" value="ENSP00000295150.3"/>
    <property type="RefSeq nucleotide sequence ID" value="NM_001040710.3"/>
    <property type="RefSeq protein sequence ID" value="NP_001035800.1"/>
</dbReference>
<dbReference type="UCSC" id="uc002rfc.3">
    <property type="organism name" value="human"/>
</dbReference>
<dbReference type="AGR" id="HGNC:34418"/>
<dbReference type="CTD" id="653140"/>
<dbReference type="DisGeNET" id="653140"/>
<dbReference type="GeneCards" id="FAM228A"/>
<dbReference type="HGNC" id="HGNC:34418">
    <property type="gene designation" value="FAM228A"/>
</dbReference>
<dbReference type="HPA" id="ENSG00000186453">
    <property type="expression patterns" value="Tissue enriched (testis)"/>
</dbReference>
<dbReference type="neXtProt" id="NX_Q86W67"/>
<dbReference type="OpenTargets" id="ENSG00000186453"/>
<dbReference type="PharmGKB" id="PA164717160"/>
<dbReference type="VEuPathDB" id="HostDB:ENSG00000186453"/>
<dbReference type="eggNOG" id="ENOG502TDFN">
    <property type="taxonomic scope" value="Eukaryota"/>
</dbReference>
<dbReference type="GeneTree" id="ENSGT00530000064185"/>
<dbReference type="InParanoid" id="Q86W67"/>
<dbReference type="OMA" id="THEQHIL"/>
<dbReference type="OrthoDB" id="9905773at2759"/>
<dbReference type="PAN-GO" id="Q86W67">
    <property type="GO annotations" value="0 GO annotations based on evolutionary models"/>
</dbReference>
<dbReference type="PhylomeDB" id="Q86W67"/>
<dbReference type="TreeFam" id="TF336288"/>
<dbReference type="PathwayCommons" id="Q86W67"/>
<dbReference type="SignaLink" id="Q86W67"/>
<dbReference type="BioGRID-ORCS" id="653140">
    <property type="hits" value="13 hits in 1137 CRISPR screens"/>
</dbReference>
<dbReference type="CD-CODE" id="B5B9A610">
    <property type="entry name" value="PML body"/>
</dbReference>
<dbReference type="GenomeRNAi" id="653140"/>
<dbReference type="Pharos" id="Q86W67">
    <property type="development level" value="Tdark"/>
</dbReference>
<dbReference type="PRO" id="PR:Q86W67"/>
<dbReference type="Proteomes" id="UP000005640">
    <property type="component" value="Chromosome 2"/>
</dbReference>
<dbReference type="RNAct" id="Q86W67">
    <property type="molecule type" value="protein"/>
</dbReference>
<dbReference type="Bgee" id="ENSG00000186453">
    <property type="expression patterns" value="Expressed in left testis and 99 other cell types or tissues"/>
</dbReference>
<dbReference type="ExpressionAtlas" id="Q86W67">
    <property type="expression patterns" value="baseline and differential"/>
</dbReference>
<dbReference type="InterPro" id="IPR040046">
    <property type="entry name" value="FAM228"/>
</dbReference>
<dbReference type="PANTHER" id="PTHR28584">
    <property type="entry name" value="FAMILY WITH SEQUENCE SIMILARITY 228 MEMBER A"/>
    <property type="match status" value="1"/>
</dbReference>
<dbReference type="PANTHER" id="PTHR28584:SF2">
    <property type="entry name" value="PROTEIN FAM228A"/>
    <property type="match status" value="1"/>
</dbReference>
<organism>
    <name type="scientific">Homo sapiens</name>
    <name type="common">Human</name>
    <dbReference type="NCBI Taxonomy" id="9606"/>
    <lineage>
        <taxon>Eukaryota</taxon>
        <taxon>Metazoa</taxon>
        <taxon>Chordata</taxon>
        <taxon>Craniata</taxon>
        <taxon>Vertebrata</taxon>
        <taxon>Euteleostomi</taxon>
        <taxon>Mammalia</taxon>
        <taxon>Eutheria</taxon>
        <taxon>Euarchontoglires</taxon>
        <taxon>Primates</taxon>
        <taxon>Haplorrhini</taxon>
        <taxon>Catarrhini</taxon>
        <taxon>Hominidae</taxon>
        <taxon>Homo</taxon>
    </lineage>
</organism>
<feature type="chain" id="PRO_0000348445" description="Protein FAM228A">
    <location>
        <begin position="1"/>
        <end position="206"/>
    </location>
</feature>
<feature type="sequence variant" id="VAR_046178" description="In dbSNP:rs2288073.">
    <original>Y</original>
    <variation>C</variation>
    <location>
        <position position="140"/>
    </location>
</feature>
<proteinExistence type="evidence at protein level"/>